<feature type="chain" id="PRO_0000377388" description="Transcription factor kayak">
    <location>
        <begin position="1"/>
        <end position="778"/>
    </location>
</feature>
<feature type="domain" description="bZIP" evidence="4">
    <location>
        <begin position="457"/>
        <end position="520"/>
    </location>
</feature>
<feature type="region of interest" description="Disordered" evidence="5">
    <location>
        <begin position="24"/>
        <end position="57"/>
    </location>
</feature>
<feature type="region of interest" description="Disordered" evidence="5">
    <location>
        <begin position="76"/>
        <end position="130"/>
    </location>
</feature>
<feature type="region of interest" description="Disordered" evidence="5">
    <location>
        <begin position="183"/>
        <end position="223"/>
    </location>
</feature>
<feature type="region of interest" description="Disordered" evidence="5">
    <location>
        <begin position="294"/>
        <end position="320"/>
    </location>
</feature>
<feature type="region of interest" description="Disordered" evidence="5">
    <location>
        <begin position="356"/>
        <end position="414"/>
    </location>
</feature>
<feature type="region of interest" description="Disordered" evidence="5">
    <location>
        <begin position="427"/>
        <end position="478"/>
    </location>
</feature>
<feature type="region of interest" description="Basic motif" evidence="4">
    <location>
        <begin position="459"/>
        <end position="478"/>
    </location>
</feature>
<feature type="region of interest" description="Leucine-zipper" evidence="4">
    <location>
        <begin position="485"/>
        <end position="513"/>
    </location>
</feature>
<feature type="region of interest" description="Disordered" evidence="5">
    <location>
        <begin position="550"/>
        <end position="594"/>
    </location>
</feature>
<feature type="region of interest" description="Disordered" evidence="5">
    <location>
        <begin position="756"/>
        <end position="778"/>
    </location>
</feature>
<feature type="compositionally biased region" description="Low complexity" evidence="5">
    <location>
        <begin position="24"/>
        <end position="54"/>
    </location>
</feature>
<feature type="compositionally biased region" description="Low complexity" evidence="5">
    <location>
        <begin position="77"/>
        <end position="98"/>
    </location>
</feature>
<feature type="compositionally biased region" description="Polar residues" evidence="5">
    <location>
        <begin position="99"/>
        <end position="108"/>
    </location>
</feature>
<feature type="compositionally biased region" description="Low complexity" evidence="5">
    <location>
        <begin position="109"/>
        <end position="130"/>
    </location>
</feature>
<feature type="compositionally biased region" description="Low complexity" evidence="5">
    <location>
        <begin position="183"/>
        <end position="222"/>
    </location>
</feature>
<feature type="compositionally biased region" description="Low complexity" evidence="5">
    <location>
        <begin position="382"/>
        <end position="402"/>
    </location>
</feature>
<feature type="compositionally biased region" description="Gly residues" evidence="5">
    <location>
        <begin position="403"/>
        <end position="414"/>
    </location>
</feature>
<feature type="compositionally biased region" description="Polar residues" evidence="5">
    <location>
        <begin position="427"/>
        <end position="436"/>
    </location>
</feature>
<feature type="compositionally biased region" description="Low complexity" evidence="5">
    <location>
        <begin position="550"/>
        <end position="571"/>
    </location>
</feature>
<feature type="compositionally biased region" description="Polar residues" evidence="5">
    <location>
        <begin position="579"/>
        <end position="589"/>
    </location>
</feature>
<feature type="modified residue" description="Phosphoserine" evidence="1">
    <location>
        <position position="588"/>
    </location>
</feature>
<feature type="splice variant" id="VSP_044219" description="In isoform A." evidence="6">
    <original>MMKNLNGRAHNACYHPYLHQLHQAQQLQHQQQQQQQQQQQTQLQQTPHAAHTQQNGLTQNAQPQIQWPYNSSAAANQYYQQQQQQQQQEQQMLRQRQLPTQQPAASYEQQQQQPQQHQHLQQQQQQHQLRQTFTNAATNTNAAAMAAMCQMQNFFTQQQQQQQQQEFNNNCVHINYNQQQQQQPTAAVATTTPTQKATPTKTTPT</original>
    <variation>MIAIKSIEMQHNNNSGSIGGSGNDSHVQQQQQQQMLHQQQQQFQQDFVWANIGNISGSNSPISNSLQLQLQQQQQRSASWTAECNKQRQITNNNNNMNVNYNQHLTQQQQQQLQQYMQPTYNNYTQLQLQQQQQQPQQLVPATTSQSNNCYYACQQQQQQQHQQQQHQQQQHQQQQQQQFLAPTTTPSAVAATAIAATRQVIQRH</variation>
    <location>
        <begin position="1"/>
        <end position="205"/>
    </location>
</feature>
<feature type="splice variant" id="VSP_044220" description="In isoform B." evidence="6">
    <original>MMKNLNGRAHNACYHPYLHQLHQAQQLQHQQQQQQQQQQQTQLQQTPHAAHTQQNGLTQNAQPQI</original>
    <variation>MKVKVERKTITKATPTTMSKPKLDEEESEEAAATTEQLDFLPADLTATTTTIAAATPTTAAAAAA</variation>
    <location>
        <begin position="1"/>
        <end position="65"/>
    </location>
</feature>
<feature type="splice variant" id="VSP_044221" description="In isoform C." evidence="6">
    <original>MMKNLNGRAHNACYHPYLHQLHQAQ</original>
    <variation>MTLDNYNIFGDEYLFSMPLSPLPKV</variation>
    <location>
        <begin position="1"/>
        <end position="25"/>
    </location>
</feature>
<feature type="splice variant" id="VSP_044222" description="In isoform C." evidence="6">
    <location>
        <begin position="26"/>
        <end position="245"/>
    </location>
</feature>
<feature type="splice variant" id="VSP_044223" description="In isoform B." evidence="6">
    <location>
        <begin position="66"/>
        <end position="245"/>
    </location>
</feature>
<feature type="splice variant" id="VSP_044224" description="In isoform A." evidence="6">
    <location>
        <begin position="206"/>
        <end position="245"/>
    </location>
</feature>
<protein>
    <recommendedName>
        <fullName evidence="2">Transcription factor kayak</fullName>
    </recommendedName>
</protein>
<accession>Q29AP1</accession>
<accession>I5AN93</accession>
<accession>I5AN94</accession>
<accession>I5AN95</accession>
<keyword id="KW-0010">Activator</keyword>
<keyword id="KW-0025">Alternative splicing</keyword>
<keyword id="KW-0238">DNA-binding</keyword>
<keyword id="KW-0539">Nucleus</keyword>
<keyword id="KW-0597">Phosphoprotein</keyword>
<keyword id="KW-1185">Reference proteome</keyword>
<keyword id="KW-0804">Transcription</keyword>
<keyword id="KW-0805">Transcription regulation</keyword>
<sequence length="778" mass="84349">MMKNLNGRAHNACYHPYLHQLHQAQQLQHQQQQQQQQQQQTQLQQTPHAAHTQQNGLTQNAQPQIQWPYNSSAAANQYYQQQQQQQQQEQQMLRQRQLPTQQPAASYEQQQQQPQQHQHLQQQQQQHQLRQTFTNAATNTNAAAMAAMCQMQNFFTQQQQQQQQQEFNNNCVHINYNQQQQQQPTAAVATTTPTQKATPTKTTPTNNPTTTTNNSTTTTTTNGDKFAMDASEIASFLASELFMQQLGTFDGIQSAPTLTTPTLTPTTLRSIEETFFEMTNDAPYQAGFKPPPLAPLVNNNNNNNGNGNGNGNGNGNVLASSVVPTTTTTATIIGVSNPLISQQQQQQQQQVFDCGASVMPGSDTEESNGSWADGQMNEDQSISDTSSGATDSTSYQNGHMMGNSGGGNGGGTGGANNFSNVLAAAGRNTNTSNSATPARRGGGRRPNRSANMTPEEEEKRRIRRERNKQAAARCRKRRVDQTNELTEEVELLEKRGENLKKEMELLNETKNQLEYFLQAHRPTCQKVRADMLSVTTCNGLIGPPALLSAGSCGSGSSHHNNNSNSNDSSSGTITGLDATLNSTGRSNSPLDLKPVPIDEDLLLHIKDEPLDGALDSSSSLDQDGPPPHKRFALPNIATLMTPTGPAGSLQTPVSGTAPHGFGSFPTTISNISNISSIHNGPTLNSLNKMPKERPNTLAFQRPFGGQMQLSGSGRAPTQIQGVPIQTPSTGTFNFDSLMDGGTGLTPVSGPLIPNCTSQNKHPLELPTPTTEPSKLVSL</sequence>
<reference key="1">
    <citation type="journal article" date="2005" name="Genome Res.">
        <title>Comparative genome sequencing of Drosophila pseudoobscura: chromosomal, gene, and cis-element evolution.</title>
        <authorList>
            <person name="Richards S."/>
            <person name="Liu Y."/>
            <person name="Bettencourt B.R."/>
            <person name="Hradecky P."/>
            <person name="Letovsky S."/>
            <person name="Nielsen R."/>
            <person name="Thornton K."/>
            <person name="Hubisz M.J."/>
            <person name="Chen R."/>
            <person name="Meisel R.P."/>
            <person name="Couronne O."/>
            <person name="Hua S."/>
            <person name="Smith M.A."/>
            <person name="Zhang P."/>
            <person name="Liu J."/>
            <person name="Bussemaker H.J."/>
            <person name="van Batenburg M.F."/>
            <person name="Howells S.L."/>
            <person name="Scherer S.E."/>
            <person name="Sodergren E."/>
            <person name="Matthews B.B."/>
            <person name="Crosby M.A."/>
            <person name="Schroeder A.J."/>
            <person name="Ortiz-Barrientos D."/>
            <person name="Rives C.M."/>
            <person name="Metzker M.L."/>
            <person name="Muzny D.M."/>
            <person name="Scott G."/>
            <person name="Steffen D."/>
            <person name="Wheeler D.A."/>
            <person name="Worley K.C."/>
            <person name="Havlak P."/>
            <person name="Durbin K.J."/>
            <person name="Egan A."/>
            <person name="Gill R."/>
            <person name="Hume J."/>
            <person name="Morgan M.B."/>
            <person name="Miner G."/>
            <person name="Hamilton C."/>
            <person name="Huang Y."/>
            <person name="Waldron L."/>
            <person name="Verduzco D."/>
            <person name="Clerc-Blankenburg K.P."/>
            <person name="Dubchak I."/>
            <person name="Noor M.A.F."/>
            <person name="Anderson W."/>
            <person name="White K.P."/>
            <person name="Clark A.G."/>
            <person name="Schaeffer S.W."/>
            <person name="Gelbart W.M."/>
            <person name="Weinstock G.M."/>
            <person name="Gibbs R.A."/>
        </authorList>
    </citation>
    <scope>NUCLEOTIDE SEQUENCE [LARGE SCALE GENOMIC DNA]</scope>
    <scope>ALTERNATIVE SPLICING</scope>
    <source>
        <strain>MV2-25 / Tucson 14011-0121.94</strain>
    </source>
</reference>
<dbReference type="EMBL" id="CM000070">
    <property type="protein sequence ID" value="EAL27308.3"/>
    <property type="molecule type" value="Genomic_DNA"/>
</dbReference>
<dbReference type="EMBL" id="CM000070">
    <property type="protein sequence ID" value="EIM52428.1"/>
    <property type="molecule type" value="Genomic_DNA"/>
</dbReference>
<dbReference type="EMBL" id="CM000070">
    <property type="protein sequence ID" value="EIM52429.1"/>
    <property type="molecule type" value="Genomic_DNA"/>
</dbReference>
<dbReference type="EMBL" id="CM000070">
    <property type="protein sequence ID" value="EIM52430.1"/>
    <property type="molecule type" value="Genomic_DNA"/>
</dbReference>
<dbReference type="SMR" id="Q29AP1"/>
<dbReference type="FunCoup" id="Q29AP1">
    <property type="interactions" value="472"/>
</dbReference>
<dbReference type="STRING" id="46245.Q29AP1"/>
<dbReference type="eggNOG" id="KOG1414">
    <property type="taxonomic scope" value="Eukaryota"/>
</dbReference>
<dbReference type="InParanoid" id="Q29AP1"/>
<dbReference type="OMA" id="HQSLHFA"/>
<dbReference type="ChiTaRS" id="kay">
    <property type="organism name" value="fly"/>
</dbReference>
<dbReference type="Proteomes" id="UP000001819">
    <property type="component" value="Unplaced"/>
</dbReference>
<dbReference type="GO" id="GO:0005634">
    <property type="term" value="C:nucleus"/>
    <property type="evidence" value="ECO:0000250"/>
    <property type="project" value="UniProtKB"/>
</dbReference>
<dbReference type="GO" id="GO:0003677">
    <property type="term" value="F:DNA binding"/>
    <property type="evidence" value="ECO:0000250"/>
    <property type="project" value="UniProtKB"/>
</dbReference>
<dbReference type="GO" id="GO:0000981">
    <property type="term" value="F:DNA-binding transcription factor activity, RNA polymerase II-specific"/>
    <property type="evidence" value="ECO:0007669"/>
    <property type="project" value="TreeGrafter"/>
</dbReference>
<dbReference type="GO" id="GO:0000978">
    <property type="term" value="F:RNA polymerase II cis-regulatory region sequence-specific DNA binding"/>
    <property type="evidence" value="ECO:0007669"/>
    <property type="project" value="TreeGrafter"/>
</dbReference>
<dbReference type="GO" id="GO:0009792">
    <property type="term" value="P:embryo development ending in birth or egg hatching"/>
    <property type="evidence" value="ECO:0000250"/>
    <property type="project" value="UniProtKB"/>
</dbReference>
<dbReference type="Gene3D" id="1.20.5.170">
    <property type="match status" value="1"/>
</dbReference>
<dbReference type="InterPro" id="IPR000837">
    <property type="entry name" value="AP-1"/>
</dbReference>
<dbReference type="InterPro" id="IPR004827">
    <property type="entry name" value="bZIP"/>
</dbReference>
<dbReference type="InterPro" id="IPR046347">
    <property type="entry name" value="bZIP_sf"/>
</dbReference>
<dbReference type="PANTHER" id="PTHR23351:SF24">
    <property type="entry name" value="ACTIVATING TRANSCRIPTION FACTOR 3-RELATED"/>
    <property type="match status" value="1"/>
</dbReference>
<dbReference type="PANTHER" id="PTHR23351">
    <property type="entry name" value="FOS TRANSCRIPTION FACTOR-RELATED"/>
    <property type="match status" value="1"/>
</dbReference>
<dbReference type="Pfam" id="PF00170">
    <property type="entry name" value="bZIP_1"/>
    <property type="match status" value="1"/>
</dbReference>
<dbReference type="PRINTS" id="PR00042">
    <property type="entry name" value="LEUZIPPRFOS"/>
</dbReference>
<dbReference type="SMART" id="SM00338">
    <property type="entry name" value="BRLZ"/>
    <property type="match status" value="1"/>
</dbReference>
<dbReference type="SUPFAM" id="SSF57959">
    <property type="entry name" value="Leucine zipper domain"/>
    <property type="match status" value="1"/>
</dbReference>
<dbReference type="PROSITE" id="PS50217">
    <property type="entry name" value="BZIP"/>
    <property type="match status" value="1"/>
</dbReference>
<dbReference type="PROSITE" id="PS00036">
    <property type="entry name" value="BZIP_BASIC"/>
    <property type="match status" value="1"/>
</dbReference>
<proteinExistence type="inferred from homology"/>
<comment type="function">
    <text evidence="2">Developmentally regulated transcription factor AP-1 binds and recognizes the enhancer DNA sequence: 5'-TGA[CG]TCA-3'. May play a role in the function or determination of a particular subset of cells in the developing embryo. It is able to carry out its function either independently of or in conjunction with Jra (By similarity).</text>
</comment>
<comment type="subunit">
    <text evidence="1">Homodimer. Heterodimer with Jra. The kay-Jra heterodimer binds more stably to the AP-1 site than either of the two proteins alone (By similarity).</text>
</comment>
<comment type="subcellular location">
    <subcellularLocation>
        <location evidence="2 4">Nucleus</location>
    </subcellularLocation>
</comment>
<comment type="alternative products">
    <event type="alternative splicing"/>
    <isoform>
        <id>Q29AP1-1</id>
        <name>D</name>
        <sequence type="displayed"/>
    </isoform>
    <isoform>
        <id>Q29AP1-2</id>
        <name>A</name>
        <sequence type="described" ref="VSP_044219 VSP_044224"/>
    </isoform>
    <isoform>
        <id>Q29AP1-3</id>
        <name>B</name>
        <sequence type="described" ref="VSP_044220 VSP_044223"/>
    </isoform>
    <isoform>
        <id>Q29AP1-4</id>
        <name>C</name>
        <sequence type="described" ref="VSP_044221 VSP_044222"/>
    </isoform>
</comment>
<comment type="similarity">
    <text evidence="3">Belongs to the bZIP family. Fos subfamily.</text>
</comment>
<gene>
    <name evidence="2" type="primary">kay</name>
    <name type="ORF">GA13774</name>
</gene>
<evidence type="ECO:0000250" key="1"/>
<evidence type="ECO:0000250" key="2">
    <source>
        <dbReference type="UniProtKB" id="P21525"/>
    </source>
</evidence>
<evidence type="ECO:0000255" key="3"/>
<evidence type="ECO:0000255" key="4">
    <source>
        <dbReference type="PROSITE-ProRule" id="PRU00978"/>
    </source>
</evidence>
<evidence type="ECO:0000256" key="5">
    <source>
        <dbReference type="SAM" id="MobiDB-lite"/>
    </source>
</evidence>
<evidence type="ECO:0000305" key="6"/>
<name>FOSL_DROPS</name>
<organism>
    <name type="scientific">Drosophila pseudoobscura pseudoobscura</name>
    <name type="common">Fruit fly</name>
    <dbReference type="NCBI Taxonomy" id="46245"/>
    <lineage>
        <taxon>Eukaryota</taxon>
        <taxon>Metazoa</taxon>
        <taxon>Ecdysozoa</taxon>
        <taxon>Arthropoda</taxon>
        <taxon>Hexapoda</taxon>
        <taxon>Insecta</taxon>
        <taxon>Pterygota</taxon>
        <taxon>Neoptera</taxon>
        <taxon>Endopterygota</taxon>
        <taxon>Diptera</taxon>
        <taxon>Brachycera</taxon>
        <taxon>Muscomorpha</taxon>
        <taxon>Ephydroidea</taxon>
        <taxon>Drosophilidae</taxon>
        <taxon>Drosophila</taxon>
        <taxon>Sophophora</taxon>
    </lineage>
</organism>